<protein>
    <recommendedName>
        <fullName>Probable histone H2A.3</fullName>
    </recommendedName>
</protein>
<dbReference type="EMBL" id="AP003898">
    <property type="protein sequence ID" value="BAD01189.1"/>
    <property type="molecule type" value="Genomic_DNA"/>
</dbReference>
<dbReference type="EMBL" id="AP005734">
    <property type="protein sequence ID" value="BAC75621.1"/>
    <property type="molecule type" value="Genomic_DNA"/>
</dbReference>
<dbReference type="EMBL" id="AP008214">
    <property type="protein sequence ID" value="BAF23758.1"/>
    <property type="molecule type" value="Genomic_DNA"/>
</dbReference>
<dbReference type="EMBL" id="AP014964">
    <property type="protein sequence ID" value="BAT05521.1"/>
    <property type="molecule type" value="Genomic_DNA"/>
</dbReference>
<dbReference type="EMBL" id="CM000145">
    <property type="protein sequence ID" value="EAZ42802.1"/>
    <property type="molecule type" value="Genomic_DNA"/>
</dbReference>
<dbReference type="RefSeq" id="XP_015649904.1">
    <property type="nucleotide sequence ID" value="XM_015794418.1"/>
</dbReference>
<dbReference type="SMR" id="Q84NJ4"/>
<dbReference type="FunCoup" id="Q84NJ4">
    <property type="interactions" value="1930"/>
</dbReference>
<dbReference type="STRING" id="39947.Q84NJ4"/>
<dbReference type="PaxDb" id="39947-Q84NJ4"/>
<dbReference type="EnsemblPlants" id="Os08t0427700-00">
    <property type="protein sequence ID" value="Os08t0427700-00"/>
    <property type="gene ID" value="Os08g0427700"/>
</dbReference>
<dbReference type="Gramene" id="Os08t0427700-00">
    <property type="protein sequence ID" value="Os08t0427700-00"/>
    <property type="gene ID" value="Os08g0427700"/>
</dbReference>
<dbReference type="eggNOG" id="KOG1756">
    <property type="taxonomic scope" value="Eukaryota"/>
</dbReference>
<dbReference type="HOGENOM" id="CLU_062828_3_0_1"/>
<dbReference type="InParanoid" id="Q84NJ4"/>
<dbReference type="OMA" id="ANEMFIN"/>
<dbReference type="OrthoDB" id="9421954at2759"/>
<dbReference type="Proteomes" id="UP000000763">
    <property type="component" value="Chromosome 8"/>
</dbReference>
<dbReference type="Proteomes" id="UP000007752">
    <property type="component" value="Chromosome 8"/>
</dbReference>
<dbReference type="Proteomes" id="UP000059680">
    <property type="component" value="Chromosome 8"/>
</dbReference>
<dbReference type="GO" id="GO:0000786">
    <property type="term" value="C:nucleosome"/>
    <property type="evidence" value="ECO:0000318"/>
    <property type="project" value="GO_Central"/>
</dbReference>
<dbReference type="GO" id="GO:0005634">
    <property type="term" value="C:nucleus"/>
    <property type="evidence" value="ECO:0000318"/>
    <property type="project" value="GO_Central"/>
</dbReference>
<dbReference type="GO" id="GO:0003677">
    <property type="term" value="F:DNA binding"/>
    <property type="evidence" value="ECO:0007669"/>
    <property type="project" value="UniProtKB-KW"/>
</dbReference>
<dbReference type="GO" id="GO:0046982">
    <property type="term" value="F:protein heterodimerization activity"/>
    <property type="evidence" value="ECO:0007669"/>
    <property type="project" value="InterPro"/>
</dbReference>
<dbReference type="GO" id="GO:0030527">
    <property type="term" value="F:structural constituent of chromatin"/>
    <property type="evidence" value="ECO:0000318"/>
    <property type="project" value="GO_Central"/>
</dbReference>
<dbReference type="GO" id="GO:0031507">
    <property type="term" value="P:heterochromatin formation"/>
    <property type="evidence" value="ECO:0000318"/>
    <property type="project" value="GO_Central"/>
</dbReference>
<dbReference type="CDD" id="cd00074">
    <property type="entry name" value="HFD_H2A"/>
    <property type="match status" value="1"/>
</dbReference>
<dbReference type="FunFam" id="1.10.20.10:FF:000009">
    <property type="entry name" value="Histone H2A"/>
    <property type="match status" value="1"/>
</dbReference>
<dbReference type="Gene3D" id="1.10.20.10">
    <property type="entry name" value="Histone, subunit A"/>
    <property type="match status" value="1"/>
</dbReference>
<dbReference type="InterPro" id="IPR009072">
    <property type="entry name" value="Histone-fold"/>
</dbReference>
<dbReference type="InterPro" id="IPR002119">
    <property type="entry name" value="Histone_H2A"/>
</dbReference>
<dbReference type="InterPro" id="IPR007125">
    <property type="entry name" value="Histone_H2A/H2B/H3"/>
</dbReference>
<dbReference type="InterPro" id="IPR032454">
    <property type="entry name" value="Histone_H2A_C"/>
</dbReference>
<dbReference type="InterPro" id="IPR032458">
    <property type="entry name" value="Histone_H2A_CS"/>
</dbReference>
<dbReference type="PANTHER" id="PTHR23430">
    <property type="entry name" value="HISTONE H2A"/>
    <property type="match status" value="1"/>
</dbReference>
<dbReference type="Pfam" id="PF00125">
    <property type="entry name" value="Histone"/>
    <property type="match status" value="1"/>
</dbReference>
<dbReference type="Pfam" id="PF16211">
    <property type="entry name" value="Histone_H2A_C"/>
    <property type="match status" value="1"/>
</dbReference>
<dbReference type="PRINTS" id="PR00620">
    <property type="entry name" value="HISTONEH2A"/>
</dbReference>
<dbReference type="SMART" id="SM00414">
    <property type="entry name" value="H2A"/>
    <property type="match status" value="1"/>
</dbReference>
<dbReference type="SUPFAM" id="SSF47113">
    <property type="entry name" value="Histone-fold"/>
    <property type="match status" value="1"/>
</dbReference>
<dbReference type="PROSITE" id="PS00046">
    <property type="entry name" value="HISTONE_H2A"/>
    <property type="match status" value="1"/>
</dbReference>
<organism>
    <name type="scientific">Oryza sativa subsp. japonica</name>
    <name type="common">Rice</name>
    <dbReference type="NCBI Taxonomy" id="39947"/>
    <lineage>
        <taxon>Eukaryota</taxon>
        <taxon>Viridiplantae</taxon>
        <taxon>Streptophyta</taxon>
        <taxon>Embryophyta</taxon>
        <taxon>Tracheophyta</taxon>
        <taxon>Spermatophyta</taxon>
        <taxon>Magnoliopsida</taxon>
        <taxon>Liliopsida</taxon>
        <taxon>Poales</taxon>
        <taxon>Poaceae</taxon>
        <taxon>BOP clade</taxon>
        <taxon>Oryzoideae</taxon>
        <taxon>Oryzeae</taxon>
        <taxon>Oryzinae</taxon>
        <taxon>Oryza</taxon>
        <taxon>Oryza sativa</taxon>
    </lineage>
</organism>
<name>H2A3_ORYSJ</name>
<evidence type="ECO:0000250" key="1"/>
<evidence type="ECO:0000305" key="2"/>
<proteinExistence type="inferred from homology"/>
<accession>Q84NJ4</accession>
<accession>A0A0P0XFX3</accession>
<accession>Q0J5K7</accession>
<sequence>MAGRGKAIGSSAAKKATSRSSKAGLQFPVGRIARFLKAGKYAERVGAGAPVYLAAVLEYLAAEVLELAGNAARDNKKTRIVPRHIQLAVRNDEELSRLLGAVTIANGGVMPNIHNLLLPKKAGSSAKAAAADDE</sequence>
<feature type="chain" id="PRO_0000055260" description="Probable histone H2A.3">
    <location>
        <begin position="1"/>
        <end position="134"/>
    </location>
</feature>
<comment type="function">
    <text>Core component of nucleosome. Nucleosomes wrap and compact DNA into chromatin, limiting DNA accessibility to the cellular machineries which require DNA as a template. Histones thereby play a central role in transcription regulation, DNA repair, DNA replication and chromosomal stability. DNA accessibility is regulated via a complex set of post-translational modifications of histones, also called histone code, and nucleosome remodeling.</text>
</comment>
<comment type="subunit">
    <text>The nucleosome is a histone octamer containing two molecules each of H2A, H2B, H3 and H4 assembled in one H3-H4 heterotetramer and two H2A-H2B heterodimers. The octamer wraps approximately 147 bp of DNA.</text>
</comment>
<comment type="subcellular location">
    <subcellularLocation>
        <location evidence="1">Nucleus</location>
    </subcellularLocation>
    <subcellularLocation>
        <location evidence="1">Chromosome</location>
    </subcellularLocation>
</comment>
<comment type="similarity">
    <text evidence="2">Belongs to the histone H2A family.</text>
</comment>
<keyword id="KW-0158">Chromosome</keyword>
<keyword id="KW-0238">DNA-binding</keyword>
<keyword id="KW-0544">Nucleosome core</keyword>
<keyword id="KW-0539">Nucleus</keyword>
<keyword id="KW-1185">Reference proteome</keyword>
<gene>
    <name type="ordered locus">Os08g0427700</name>
    <name type="ordered locus">LOC_Os08g33100</name>
    <name type="ORF">OJ1663_D06.11</name>
    <name type="ORF">OsJ_026285</name>
    <name type="ORF">OSJNBb0032E15.118</name>
</gene>
<reference key="1">
    <citation type="journal article" date="2005" name="Nature">
        <title>The map-based sequence of the rice genome.</title>
        <authorList>
            <consortium name="International rice genome sequencing project (IRGSP)"/>
        </authorList>
    </citation>
    <scope>NUCLEOTIDE SEQUENCE [LARGE SCALE GENOMIC DNA]</scope>
    <source>
        <strain>cv. Nipponbare</strain>
    </source>
</reference>
<reference key="2">
    <citation type="journal article" date="2008" name="Nucleic Acids Res.">
        <title>The rice annotation project database (RAP-DB): 2008 update.</title>
        <authorList>
            <consortium name="The rice annotation project (RAP)"/>
        </authorList>
    </citation>
    <scope>GENOME REANNOTATION</scope>
    <source>
        <strain>cv. Nipponbare</strain>
    </source>
</reference>
<reference key="3">
    <citation type="journal article" date="2013" name="Rice">
        <title>Improvement of the Oryza sativa Nipponbare reference genome using next generation sequence and optical map data.</title>
        <authorList>
            <person name="Kawahara Y."/>
            <person name="de la Bastide M."/>
            <person name="Hamilton J.P."/>
            <person name="Kanamori H."/>
            <person name="McCombie W.R."/>
            <person name="Ouyang S."/>
            <person name="Schwartz D.C."/>
            <person name="Tanaka T."/>
            <person name="Wu J."/>
            <person name="Zhou S."/>
            <person name="Childs K.L."/>
            <person name="Davidson R.M."/>
            <person name="Lin H."/>
            <person name="Quesada-Ocampo L."/>
            <person name="Vaillancourt B."/>
            <person name="Sakai H."/>
            <person name="Lee S.S."/>
            <person name="Kim J."/>
            <person name="Numa H."/>
            <person name="Itoh T."/>
            <person name="Buell C.R."/>
            <person name="Matsumoto T."/>
        </authorList>
    </citation>
    <scope>GENOME REANNOTATION</scope>
    <source>
        <strain>cv. Nipponbare</strain>
    </source>
</reference>
<reference key="4">
    <citation type="journal article" date="2005" name="PLoS Biol.">
        <title>The genomes of Oryza sativa: a history of duplications.</title>
        <authorList>
            <person name="Yu J."/>
            <person name="Wang J."/>
            <person name="Lin W."/>
            <person name="Li S."/>
            <person name="Li H."/>
            <person name="Zhou J."/>
            <person name="Ni P."/>
            <person name="Dong W."/>
            <person name="Hu S."/>
            <person name="Zeng C."/>
            <person name="Zhang J."/>
            <person name="Zhang Y."/>
            <person name="Li R."/>
            <person name="Xu Z."/>
            <person name="Li S."/>
            <person name="Li X."/>
            <person name="Zheng H."/>
            <person name="Cong L."/>
            <person name="Lin L."/>
            <person name="Yin J."/>
            <person name="Geng J."/>
            <person name="Li G."/>
            <person name="Shi J."/>
            <person name="Liu J."/>
            <person name="Lv H."/>
            <person name="Li J."/>
            <person name="Wang J."/>
            <person name="Deng Y."/>
            <person name="Ran L."/>
            <person name="Shi X."/>
            <person name="Wang X."/>
            <person name="Wu Q."/>
            <person name="Li C."/>
            <person name="Ren X."/>
            <person name="Wang J."/>
            <person name="Wang X."/>
            <person name="Li D."/>
            <person name="Liu D."/>
            <person name="Zhang X."/>
            <person name="Ji Z."/>
            <person name="Zhao W."/>
            <person name="Sun Y."/>
            <person name="Zhang Z."/>
            <person name="Bao J."/>
            <person name="Han Y."/>
            <person name="Dong L."/>
            <person name="Ji J."/>
            <person name="Chen P."/>
            <person name="Wu S."/>
            <person name="Liu J."/>
            <person name="Xiao Y."/>
            <person name="Bu D."/>
            <person name="Tan J."/>
            <person name="Yang L."/>
            <person name="Ye C."/>
            <person name="Zhang J."/>
            <person name="Xu J."/>
            <person name="Zhou Y."/>
            <person name="Yu Y."/>
            <person name="Zhang B."/>
            <person name="Zhuang S."/>
            <person name="Wei H."/>
            <person name="Liu B."/>
            <person name="Lei M."/>
            <person name="Yu H."/>
            <person name="Li Y."/>
            <person name="Xu H."/>
            <person name="Wei S."/>
            <person name="He X."/>
            <person name="Fang L."/>
            <person name="Zhang Z."/>
            <person name="Zhang Y."/>
            <person name="Huang X."/>
            <person name="Su Z."/>
            <person name="Tong W."/>
            <person name="Li J."/>
            <person name="Tong Z."/>
            <person name="Li S."/>
            <person name="Ye J."/>
            <person name="Wang L."/>
            <person name="Fang L."/>
            <person name="Lei T."/>
            <person name="Chen C.-S."/>
            <person name="Chen H.-C."/>
            <person name="Xu Z."/>
            <person name="Li H."/>
            <person name="Huang H."/>
            <person name="Zhang F."/>
            <person name="Xu H."/>
            <person name="Li N."/>
            <person name="Zhao C."/>
            <person name="Li S."/>
            <person name="Dong L."/>
            <person name="Huang Y."/>
            <person name="Li L."/>
            <person name="Xi Y."/>
            <person name="Qi Q."/>
            <person name="Li W."/>
            <person name="Zhang B."/>
            <person name="Hu W."/>
            <person name="Zhang Y."/>
            <person name="Tian X."/>
            <person name="Jiao Y."/>
            <person name="Liang X."/>
            <person name="Jin J."/>
            <person name="Gao L."/>
            <person name="Zheng W."/>
            <person name="Hao B."/>
            <person name="Liu S.-M."/>
            <person name="Wang W."/>
            <person name="Yuan L."/>
            <person name="Cao M."/>
            <person name="McDermott J."/>
            <person name="Samudrala R."/>
            <person name="Wang J."/>
            <person name="Wong G.K.-S."/>
            <person name="Yang H."/>
        </authorList>
    </citation>
    <scope>NUCLEOTIDE SEQUENCE [LARGE SCALE GENOMIC DNA]</scope>
    <source>
        <strain>cv. Nipponbare</strain>
    </source>
</reference>